<gene>
    <name evidence="1" type="primary">minE</name>
    <name type="ordered locus">Smal_1094</name>
</gene>
<comment type="function">
    <text evidence="1">Prevents the cell division inhibition by proteins MinC and MinD at internal division sites while permitting inhibition at polar sites. This ensures cell division at the proper site by restricting the formation of a division septum at the midpoint of the long axis of the cell.</text>
</comment>
<comment type="similarity">
    <text evidence="1">Belongs to the MinE family.</text>
</comment>
<feature type="chain" id="PRO_1000114247" description="Cell division topological specificity factor">
    <location>
        <begin position="1"/>
        <end position="86"/>
    </location>
</feature>
<accession>B4SNY7</accession>
<reference key="1">
    <citation type="submission" date="2008-06" db="EMBL/GenBank/DDBJ databases">
        <title>Complete sequence of Stenotrophomonas maltophilia R551-3.</title>
        <authorList>
            <consortium name="US DOE Joint Genome Institute"/>
            <person name="Lucas S."/>
            <person name="Copeland A."/>
            <person name="Lapidus A."/>
            <person name="Glavina del Rio T."/>
            <person name="Dalin E."/>
            <person name="Tice H."/>
            <person name="Pitluck S."/>
            <person name="Chain P."/>
            <person name="Malfatti S."/>
            <person name="Shin M."/>
            <person name="Vergez L."/>
            <person name="Lang D."/>
            <person name="Schmutz J."/>
            <person name="Larimer F."/>
            <person name="Land M."/>
            <person name="Hauser L."/>
            <person name="Kyrpides N."/>
            <person name="Mikhailova N."/>
            <person name="Taghavi S."/>
            <person name="Monchy S."/>
            <person name="Newman L."/>
            <person name="Vangronsveld J."/>
            <person name="van der Lelie D."/>
            <person name="Richardson P."/>
        </authorList>
    </citation>
    <scope>NUCLEOTIDE SEQUENCE [LARGE SCALE GENOMIC DNA]</scope>
    <source>
        <strain>R551-3</strain>
    </source>
</reference>
<keyword id="KW-0131">Cell cycle</keyword>
<keyword id="KW-0132">Cell division</keyword>
<proteinExistence type="inferred from homology"/>
<name>MINE_STRM5</name>
<organism>
    <name type="scientific">Stenotrophomonas maltophilia (strain R551-3)</name>
    <dbReference type="NCBI Taxonomy" id="391008"/>
    <lineage>
        <taxon>Bacteria</taxon>
        <taxon>Pseudomonadati</taxon>
        <taxon>Pseudomonadota</taxon>
        <taxon>Gammaproteobacteria</taxon>
        <taxon>Lysobacterales</taxon>
        <taxon>Lysobacteraceae</taxon>
        <taxon>Stenotrophomonas</taxon>
        <taxon>Stenotrophomonas maltophilia group</taxon>
    </lineage>
</organism>
<sequence>MGLFDFLKAKKTTAETAKNRLQIIIAQERSNRGGPDYLPLLQRELLEVIKKYVNIDVDAVKVDLVKDGQHDVLDISVALPEGPDKP</sequence>
<evidence type="ECO:0000255" key="1">
    <source>
        <dbReference type="HAMAP-Rule" id="MF_00262"/>
    </source>
</evidence>
<protein>
    <recommendedName>
        <fullName evidence="1">Cell division topological specificity factor</fullName>
    </recommendedName>
</protein>
<dbReference type="EMBL" id="CP001111">
    <property type="protein sequence ID" value="ACF50799.1"/>
    <property type="molecule type" value="Genomic_DNA"/>
</dbReference>
<dbReference type="RefSeq" id="WP_004148073.1">
    <property type="nucleotide sequence ID" value="NC_011071.1"/>
</dbReference>
<dbReference type="SMR" id="B4SNY7"/>
<dbReference type="STRING" id="391008.Smal_1094"/>
<dbReference type="GeneID" id="86936331"/>
<dbReference type="KEGG" id="smt:Smal_1094"/>
<dbReference type="eggNOG" id="COG0851">
    <property type="taxonomic scope" value="Bacteria"/>
</dbReference>
<dbReference type="HOGENOM" id="CLU_137929_2_1_6"/>
<dbReference type="OrthoDB" id="9802655at2"/>
<dbReference type="Proteomes" id="UP000001867">
    <property type="component" value="Chromosome"/>
</dbReference>
<dbReference type="GO" id="GO:0051301">
    <property type="term" value="P:cell division"/>
    <property type="evidence" value="ECO:0007669"/>
    <property type="project" value="UniProtKB-KW"/>
</dbReference>
<dbReference type="GO" id="GO:0032955">
    <property type="term" value="P:regulation of division septum assembly"/>
    <property type="evidence" value="ECO:0007669"/>
    <property type="project" value="InterPro"/>
</dbReference>
<dbReference type="FunFam" id="3.30.1070.10:FF:000001">
    <property type="entry name" value="Cell division topological specificity factor"/>
    <property type="match status" value="1"/>
</dbReference>
<dbReference type="Gene3D" id="3.30.1070.10">
    <property type="entry name" value="Cell division topological specificity factor MinE"/>
    <property type="match status" value="1"/>
</dbReference>
<dbReference type="HAMAP" id="MF_00262">
    <property type="entry name" value="MinE"/>
    <property type="match status" value="1"/>
</dbReference>
<dbReference type="InterPro" id="IPR005527">
    <property type="entry name" value="MinE"/>
</dbReference>
<dbReference type="InterPro" id="IPR036707">
    <property type="entry name" value="MinE_sf"/>
</dbReference>
<dbReference type="NCBIfam" id="TIGR01215">
    <property type="entry name" value="minE"/>
    <property type="match status" value="1"/>
</dbReference>
<dbReference type="NCBIfam" id="NF001422">
    <property type="entry name" value="PRK00296.1"/>
    <property type="match status" value="1"/>
</dbReference>
<dbReference type="Pfam" id="PF03776">
    <property type="entry name" value="MinE"/>
    <property type="match status" value="1"/>
</dbReference>
<dbReference type="SUPFAM" id="SSF55229">
    <property type="entry name" value="Cell division protein MinE topological specificity domain"/>
    <property type="match status" value="1"/>
</dbReference>